<protein>
    <recommendedName>
        <fullName evidence="1">Large ribosomal subunit protein uL22</fullName>
    </recommendedName>
    <alternativeName>
        <fullName evidence="2">50S ribosomal protein L22</fullName>
    </alternativeName>
</protein>
<reference key="1">
    <citation type="journal article" date="2009" name="PLoS ONE">
        <title>The complete genome of Teredinibacter turnerae T7901: an intracellular endosymbiont of marine wood-boring bivalves (shipworms).</title>
        <authorList>
            <person name="Yang J.C."/>
            <person name="Madupu R."/>
            <person name="Durkin A.S."/>
            <person name="Ekborg N.A."/>
            <person name="Pedamallu C.S."/>
            <person name="Hostetler J.B."/>
            <person name="Radune D."/>
            <person name="Toms B.S."/>
            <person name="Henrissat B."/>
            <person name="Coutinho P.M."/>
            <person name="Schwarz S."/>
            <person name="Field L."/>
            <person name="Trindade-Silva A.E."/>
            <person name="Soares C.A.G."/>
            <person name="Elshahawi S."/>
            <person name="Hanora A."/>
            <person name="Schmidt E.W."/>
            <person name="Haygood M.G."/>
            <person name="Posfai J."/>
            <person name="Benner J."/>
            <person name="Madinger C."/>
            <person name="Nove J."/>
            <person name="Anton B."/>
            <person name="Chaudhary K."/>
            <person name="Foster J."/>
            <person name="Holman A."/>
            <person name="Kumar S."/>
            <person name="Lessard P.A."/>
            <person name="Luyten Y.A."/>
            <person name="Slatko B."/>
            <person name="Wood N."/>
            <person name="Wu B."/>
            <person name="Teplitski M."/>
            <person name="Mougous J.D."/>
            <person name="Ward N."/>
            <person name="Eisen J.A."/>
            <person name="Badger J.H."/>
            <person name="Distel D.L."/>
        </authorList>
    </citation>
    <scope>NUCLEOTIDE SEQUENCE [LARGE SCALE GENOMIC DNA]</scope>
    <source>
        <strain>ATCC 39867 / T7901</strain>
    </source>
</reference>
<feature type="chain" id="PRO_1000214617" description="Large ribosomal subunit protein uL22">
    <location>
        <begin position="1"/>
        <end position="110"/>
    </location>
</feature>
<evidence type="ECO:0000255" key="1">
    <source>
        <dbReference type="HAMAP-Rule" id="MF_01331"/>
    </source>
</evidence>
<evidence type="ECO:0000305" key="2"/>
<keyword id="KW-1185">Reference proteome</keyword>
<keyword id="KW-0687">Ribonucleoprotein</keyword>
<keyword id="KW-0689">Ribosomal protein</keyword>
<keyword id="KW-0694">RNA-binding</keyword>
<keyword id="KW-0699">rRNA-binding</keyword>
<proteinExistence type="inferred from homology"/>
<comment type="function">
    <text evidence="1">This protein binds specifically to 23S rRNA; its binding is stimulated by other ribosomal proteins, e.g. L4, L17, and L20. It is important during the early stages of 50S assembly. It makes multiple contacts with different domains of the 23S rRNA in the assembled 50S subunit and ribosome (By similarity).</text>
</comment>
<comment type="function">
    <text evidence="1">The globular domain of the protein is located near the polypeptide exit tunnel on the outside of the subunit, while an extended beta-hairpin is found that lines the wall of the exit tunnel in the center of the 70S ribosome.</text>
</comment>
<comment type="subunit">
    <text evidence="1">Part of the 50S ribosomal subunit.</text>
</comment>
<comment type="similarity">
    <text evidence="1">Belongs to the universal ribosomal protein uL22 family.</text>
</comment>
<name>RL22_TERTT</name>
<dbReference type="EMBL" id="CP001614">
    <property type="protein sequence ID" value="ACR14227.1"/>
    <property type="molecule type" value="Genomic_DNA"/>
</dbReference>
<dbReference type="RefSeq" id="WP_015820343.1">
    <property type="nucleotide sequence ID" value="NC_012997.1"/>
</dbReference>
<dbReference type="SMR" id="C5BQ66"/>
<dbReference type="STRING" id="377629.TERTU_0913"/>
<dbReference type="GeneID" id="58408687"/>
<dbReference type="GeneID" id="93857738"/>
<dbReference type="KEGG" id="ttu:TERTU_0913"/>
<dbReference type="eggNOG" id="COG0091">
    <property type="taxonomic scope" value="Bacteria"/>
</dbReference>
<dbReference type="HOGENOM" id="CLU_083987_3_3_6"/>
<dbReference type="OrthoDB" id="9805969at2"/>
<dbReference type="Proteomes" id="UP000009080">
    <property type="component" value="Chromosome"/>
</dbReference>
<dbReference type="GO" id="GO:0022625">
    <property type="term" value="C:cytosolic large ribosomal subunit"/>
    <property type="evidence" value="ECO:0007669"/>
    <property type="project" value="TreeGrafter"/>
</dbReference>
<dbReference type="GO" id="GO:0019843">
    <property type="term" value="F:rRNA binding"/>
    <property type="evidence" value="ECO:0007669"/>
    <property type="project" value="UniProtKB-UniRule"/>
</dbReference>
<dbReference type="GO" id="GO:0003735">
    <property type="term" value="F:structural constituent of ribosome"/>
    <property type="evidence" value="ECO:0007669"/>
    <property type="project" value="InterPro"/>
</dbReference>
<dbReference type="GO" id="GO:0006412">
    <property type="term" value="P:translation"/>
    <property type="evidence" value="ECO:0007669"/>
    <property type="project" value="UniProtKB-UniRule"/>
</dbReference>
<dbReference type="CDD" id="cd00336">
    <property type="entry name" value="Ribosomal_L22"/>
    <property type="match status" value="1"/>
</dbReference>
<dbReference type="FunFam" id="3.90.470.10:FF:000001">
    <property type="entry name" value="50S ribosomal protein L22"/>
    <property type="match status" value="1"/>
</dbReference>
<dbReference type="Gene3D" id="3.90.470.10">
    <property type="entry name" value="Ribosomal protein L22/L17"/>
    <property type="match status" value="1"/>
</dbReference>
<dbReference type="HAMAP" id="MF_01331_B">
    <property type="entry name" value="Ribosomal_uL22_B"/>
    <property type="match status" value="1"/>
</dbReference>
<dbReference type="InterPro" id="IPR001063">
    <property type="entry name" value="Ribosomal_uL22"/>
</dbReference>
<dbReference type="InterPro" id="IPR005727">
    <property type="entry name" value="Ribosomal_uL22_bac/chlpt-type"/>
</dbReference>
<dbReference type="InterPro" id="IPR047867">
    <property type="entry name" value="Ribosomal_uL22_bac/org-type"/>
</dbReference>
<dbReference type="InterPro" id="IPR018260">
    <property type="entry name" value="Ribosomal_uL22_CS"/>
</dbReference>
<dbReference type="InterPro" id="IPR036394">
    <property type="entry name" value="Ribosomal_uL22_sf"/>
</dbReference>
<dbReference type="NCBIfam" id="TIGR01044">
    <property type="entry name" value="rplV_bact"/>
    <property type="match status" value="1"/>
</dbReference>
<dbReference type="PANTHER" id="PTHR13501">
    <property type="entry name" value="CHLOROPLAST 50S RIBOSOMAL PROTEIN L22-RELATED"/>
    <property type="match status" value="1"/>
</dbReference>
<dbReference type="PANTHER" id="PTHR13501:SF8">
    <property type="entry name" value="LARGE RIBOSOMAL SUBUNIT PROTEIN UL22M"/>
    <property type="match status" value="1"/>
</dbReference>
<dbReference type="Pfam" id="PF00237">
    <property type="entry name" value="Ribosomal_L22"/>
    <property type="match status" value="1"/>
</dbReference>
<dbReference type="SUPFAM" id="SSF54843">
    <property type="entry name" value="Ribosomal protein L22"/>
    <property type="match status" value="1"/>
</dbReference>
<dbReference type="PROSITE" id="PS00464">
    <property type="entry name" value="RIBOSOMAL_L22"/>
    <property type="match status" value="1"/>
</dbReference>
<accession>C5BQ66</accession>
<organism>
    <name type="scientific">Teredinibacter turnerae (strain ATCC 39867 / T7901)</name>
    <dbReference type="NCBI Taxonomy" id="377629"/>
    <lineage>
        <taxon>Bacteria</taxon>
        <taxon>Pseudomonadati</taxon>
        <taxon>Pseudomonadota</taxon>
        <taxon>Gammaproteobacteria</taxon>
        <taxon>Cellvibrionales</taxon>
        <taxon>Cellvibrionaceae</taxon>
        <taxon>Teredinibacter</taxon>
    </lineage>
</organism>
<gene>
    <name evidence="1" type="primary">rplV</name>
    <name type="ordered locus">TERTU_0913</name>
</gene>
<sequence length="110" mass="11942">MEVAAKLRGAGLSAQKARLVADQIRGKSVEEALDLLAFSTKKGAAVIKKVLESAIANAEHNEGADVDELKVSTIFVDEGLTMKRIRPRAKGRADRIFKRTCHITVKVADQ</sequence>